<sequence>MSLRLPSGSRRAGPRPTTGSLRLSGAGASFGAGNACSMPGIGSSFSCAFGSSSSGGNALGGNPCAGFTMNEGGLLSGNEKVTMQNLNDRLASYLENVRALEEANADLEQKIKGWYEKFGPGSCRGLDHDYSRYLPIIEDLKNQIIASTTSNANAVLQIDNARLTADVFRLKYENELALHQSVESDVNGLRRVLDVITLCRTDLEIQYETLSEELTYLKKNHKEEMQVLQCAAGGNVNVEMNAAPGVDLTVLLNNMRAEYEALAEQNRRDAEAWFNEKSASLQQQITEDVGATTSARNELTEMKRNLQTLEIELQSLLATKHSLECSLTETEGNYCAQLAQVQAQIGALEEQLHQVRTETEGQKLEYEQLLDIKVHLEKEIETYCLLIGGDDGACKSGGYKSKDYAAGNMGNQMKDPIRAIVVKKVLEEVDQRSKVLTTRLHSLEEKSQSN</sequence>
<evidence type="ECO:0000250" key="1">
    <source>
        <dbReference type="UniProtKB" id="Q7Z3Z0"/>
    </source>
</evidence>
<evidence type="ECO:0000250" key="2">
    <source>
        <dbReference type="UniProtKB" id="Q8VCW2"/>
    </source>
</evidence>
<evidence type="ECO:0000255" key="3"/>
<evidence type="ECO:0000255" key="4">
    <source>
        <dbReference type="PROSITE-ProRule" id="PRU01188"/>
    </source>
</evidence>
<evidence type="ECO:0000256" key="5">
    <source>
        <dbReference type="SAM" id="MobiDB-lite"/>
    </source>
</evidence>
<evidence type="ECO:0000269" key="6">
    <source>
    </source>
</evidence>
<evidence type="ECO:0000305" key="7"/>
<evidence type="ECO:0000312" key="8">
    <source>
        <dbReference type="EMBL" id="AAK00222.1"/>
    </source>
</evidence>
<comment type="function">
    <text evidence="1 2">Essential for the proper assembly of type I and type II keratin protein complexes and formation of keratin intermediate filaments in the inner root sheath (irs) (By similarity). Plays a role in the cytoskeleton organization (By similarity).</text>
</comment>
<comment type="subunit">
    <text evidence="1 2 7">Heterodimer of a type I and a type II keratin. Heterodimer with type II keratin KRT5 leading to the formation of keratin intermediate filament (KIF) network. Interacts with KRT6A to form filaments.</text>
</comment>
<comment type="subcellular location">
    <subcellularLocation>
        <location evidence="2">Cytoplasm</location>
    </subcellularLocation>
</comment>
<comment type="tissue specificity">
    <text evidence="6">Expressed in skin and wool follicle. Expression localized to the inner root sheath of wool follicle.</text>
</comment>
<comment type="miscellaneous">
    <text evidence="7">There are two types of cytoskeletal and microfibrillar keratin: I (acidic; 40-55 kDa) and II (neutral to basic; 56-70 kDa).</text>
</comment>
<comment type="similarity">
    <text evidence="4">Belongs to the intermediate filament family.</text>
</comment>
<proteinExistence type="evidence at transcript level"/>
<name>K1C25_SHEEP</name>
<dbReference type="EMBL" id="AF227759">
    <property type="protein sequence ID" value="AAK00222.1"/>
    <property type="molecule type" value="mRNA"/>
</dbReference>
<dbReference type="RefSeq" id="NP_001009739.1">
    <property type="nucleotide sequence ID" value="NM_001009739.1"/>
</dbReference>
<dbReference type="SMR" id="Q9BGM5"/>
<dbReference type="STRING" id="9940.ENSOARP00000016210"/>
<dbReference type="PaxDb" id="9940-ENSOARP00000016210"/>
<dbReference type="GeneID" id="443079"/>
<dbReference type="KEGG" id="oas:443079"/>
<dbReference type="CTD" id="147183"/>
<dbReference type="eggNOG" id="ENOG502SKJN">
    <property type="taxonomic scope" value="Eukaryota"/>
</dbReference>
<dbReference type="OrthoDB" id="2441647at2759"/>
<dbReference type="Proteomes" id="UP000002356">
    <property type="component" value="Unplaced"/>
</dbReference>
<dbReference type="GO" id="GO:0005737">
    <property type="term" value="C:cytoplasm"/>
    <property type="evidence" value="ECO:0007669"/>
    <property type="project" value="UniProtKB-SubCell"/>
</dbReference>
<dbReference type="GO" id="GO:0005882">
    <property type="term" value="C:intermediate filament"/>
    <property type="evidence" value="ECO:0007669"/>
    <property type="project" value="UniProtKB-KW"/>
</dbReference>
<dbReference type="GO" id="GO:0046982">
    <property type="term" value="F:protein heterodimerization activity"/>
    <property type="evidence" value="ECO:0000250"/>
    <property type="project" value="UniProtKB"/>
</dbReference>
<dbReference type="GO" id="GO:0005198">
    <property type="term" value="F:structural molecule activity"/>
    <property type="evidence" value="ECO:0007669"/>
    <property type="project" value="InterPro"/>
</dbReference>
<dbReference type="GO" id="GO:0007010">
    <property type="term" value="P:cytoskeleton organization"/>
    <property type="evidence" value="ECO:0000250"/>
    <property type="project" value="UniProtKB"/>
</dbReference>
<dbReference type="GO" id="GO:0030855">
    <property type="term" value="P:epithelial cell differentiation"/>
    <property type="evidence" value="ECO:0007669"/>
    <property type="project" value="TreeGrafter"/>
</dbReference>
<dbReference type="GO" id="GO:0031069">
    <property type="term" value="P:hair follicle morphogenesis"/>
    <property type="evidence" value="ECO:0007669"/>
    <property type="project" value="TreeGrafter"/>
</dbReference>
<dbReference type="GO" id="GO:0045109">
    <property type="term" value="P:intermediate filament organization"/>
    <property type="evidence" value="ECO:0007669"/>
    <property type="project" value="TreeGrafter"/>
</dbReference>
<dbReference type="FunFam" id="1.20.5.1160:FF:000002">
    <property type="entry name" value="Type I keratin 10"/>
    <property type="match status" value="1"/>
</dbReference>
<dbReference type="FunFam" id="1.20.5.170:FF:000002">
    <property type="entry name" value="Type I keratin KA11"/>
    <property type="match status" value="1"/>
</dbReference>
<dbReference type="FunFam" id="1.20.5.500:FF:000001">
    <property type="entry name" value="Type II keratin 23"/>
    <property type="match status" value="1"/>
</dbReference>
<dbReference type="Gene3D" id="1.20.5.170">
    <property type="match status" value="1"/>
</dbReference>
<dbReference type="Gene3D" id="1.20.5.500">
    <property type="entry name" value="Single helix bin"/>
    <property type="match status" value="1"/>
</dbReference>
<dbReference type="Gene3D" id="1.20.5.1160">
    <property type="entry name" value="Vasodilator-stimulated phosphoprotein"/>
    <property type="match status" value="1"/>
</dbReference>
<dbReference type="InterPro" id="IPR039008">
    <property type="entry name" value="IF_rod_dom"/>
</dbReference>
<dbReference type="InterPro" id="IPR002957">
    <property type="entry name" value="Keratin_I"/>
</dbReference>
<dbReference type="PANTHER" id="PTHR23239">
    <property type="entry name" value="INTERMEDIATE FILAMENT"/>
    <property type="match status" value="1"/>
</dbReference>
<dbReference type="PANTHER" id="PTHR23239:SF160">
    <property type="entry name" value="KERATIN, TYPE I CYTOSKELETAL 25"/>
    <property type="match status" value="1"/>
</dbReference>
<dbReference type="Pfam" id="PF00038">
    <property type="entry name" value="Filament"/>
    <property type="match status" value="1"/>
</dbReference>
<dbReference type="PRINTS" id="PR01248">
    <property type="entry name" value="TYPE1KERATIN"/>
</dbReference>
<dbReference type="SMART" id="SM01391">
    <property type="entry name" value="Filament"/>
    <property type="match status" value="1"/>
</dbReference>
<dbReference type="SUPFAM" id="SSF64593">
    <property type="entry name" value="Intermediate filament protein, coiled coil region"/>
    <property type="match status" value="2"/>
</dbReference>
<dbReference type="PROSITE" id="PS51842">
    <property type="entry name" value="IF_ROD_2"/>
    <property type="match status" value="1"/>
</dbReference>
<accession>Q9BGM5</accession>
<protein>
    <recommendedName>
        <fullName>Keratin, type I cytoskeletal 25</fullName>
    </recommendedName>
    <alternativeName>
        <fullName>Cytokeratin-25</fullName>
        <shortName>CK-25</shortName>
    </alternativeName>
    <alternativeName>
        <fullName>Keratin-25</fullName>
        <shortName>K25</shortName>
    </alternativeName>
    <alternativeName>
        <fullName>Type I inner root sheath-specific keratin-K25irs1</fullName>
    </alternativeName>
    <alternativeName>
        <fullName>Type I keratin intermediate filament IRSa1</fullName>
    </alternativeName>
</protein>
<reference evidence="7 8" key="1">
    <citation type="journal article" date="2001" name="J. Invest. Dermatol.">
        <title>A unique type I keratin intermediate filament gene family is abundantly expressed in the inner root sheaths of sheep and human hair follicles.</title>
        <authorList>
            <person name="Bawden C.S."/>
            <person name="McLaughlan C."/>
            <person name="Nesci A."/>
            <person name="Rogers G."/>
        </authorList>
    </citation>
    <scope>NUCLEOTIDE SEQUENCE [MRNA]</scope>
    <scope>TISSUE SPECIFICITY</scope>
    <source>
        <strain evidence="8">Corriedale</strain>
    </source>
</reference>
<organism>
    <name type="scientific">Ovis aries</name>
    <name type="common">Sheep</name>
    <dbReference type="NCBI Taxonomy" id="9940"/>
    <lineage>
        <taxon>Eukaryota</taxon>
        <taxon>Metazoa</taxon>
        <taxon>Chordata</taxon>
        <taxon>Craniata</taxon>
        <taxon>Vertebrata</taxon>
        <taxon>Euteleostomi</taxon>
        <taxon>Mammalia</taxon>
        <taxon>Eutheria</taxon>
        <taxon>Laurasiatheria</taxon>
        <taxon>Artiodactyla</taxon>
        <taxon>Ruminantia</taxon>
        <taxon>Pecora</taxon>
        <taxon>Bovidae</taxon>
        <taxon>Caprinae</taxon>
        <taxon>Ovis</taxon>
    </lineage>
</organism>
<keyword id="KW-0175">Coiled coil</keyword>
<keyword id="KW-0963">Cytoplasm</keyword>
<keyword id="KW-0403">Intermediate filament</keyword>
<keyword id="KW-0416">Keratin</keyword>
<keyword id="KW-0597">Phosphoprotein</keyword>
<keyword id="KW-1185">Reference proteome</keyword>
<feature type="chain" id="PRO_0000312695" description="Keratin, type I cytoskeletal 25">
    <location>
        <begin position="1"/>
        <end position="450"/>
    </location>
</feature>
<feature type="domain" description="IF rod" evidence="4">
    <location>
        <begin position="79"/>
        <end position="394"/>
    </location>
</feature>
<feature type="region of interest" description="Head" evidence="3">
    <location>
        <begin position="1"/>
        <end position="78"/>
    </location>
</feature>
<feature type="region of interest" description="Disordered" evidence="5">
    <location>
        <begin position="1"/>
        <end position="24"/>
    </location>
</feature>
<feature type="region of interest" description="Coil 1A" evidence="3">
    <location>
        <begin position="79"/>
        <end position="114"/>
    </location>
</feature>
<feature type="region of interest" description="Linker 1" evidence="3">
    <location>
        <begin position="115"/>
        <end position="136"/>
    </location>
</feature>
<feature type="region of interest" description="Coil 1B" evidence="3">
    <location>
        <begin position="137"/>
        <end position="228"/>
    </location>
</feature>
<feature type="region of interest" description="Linker 12" evidence="3">
    <location>
        <begin position="229"/>
        <end position="251"/>
    </location>
</feature>
<feature type="region of interest" description="Coil 2" evidence="3">
    <location>
        <begin position="252"/>
        <end position="390"/>
    </location>
</feature>
<feature type="region of interest" description="Tail" evidence="3">
    <location>
        <begin position="391"/>
        <end position="450"/>
    </location>
</feature>
<feature type="modified residue" description="Phosphoserine" evidence="1">
    <location>
        <position position="442"/>
    </location>
</feature>
<gene>
    <name evidence="1" type="primary">KRT25</name>
</gene>